<comment type="function">
    <text evidence="2">Part of the UDP-N-acetylglucosamine transferase complex that operates in the biosynthetic pathway of dolichol-linked oligosaccharides, the glycan precursors employed in protein asparagine (N)-glycosylation. The assembly of dolichol-linked oligosaccharides begins on the cytosolic side of the endoplasmic reticulum membrane and finishes in its lumen. The sequential addition of sugars to dolichol pyrophosphate produces dolichol-linked oligosaccharides containing fourteen sugars, including two GlcNAcs, nine mannoses and three glucoses. Once assembled, the oligosaccharides are transferred from the lipid to nascent proteins by oligosaccharyltransferases. Functions as a protein-membrane adapter recruiting ALG13 at the cytoplasmic face of the endoplasmic reticulum, where the complex catalyzes the second step of dolichol pyrophosphate biosynthesis, transferring a beta1,4-linked N-acetylglucosamine (GlcNAc) from UDP-GlcNAc to GlcNAc-pyrophosphatedolichol (Gn-PDol) to produce N,N'-diacetylchitobiosyl diphosphodolichol. N,N'-diacetylchitobiosyl diphosphodolichol is a substrate for ALG1, the following enzyme in the biosynthetic pathway.</text>
</comment>
<comment type="subunit">
    <text evidence="2">Forms with ALG13 the active heterodimeric UDP-N-acetylglucosamine transferase complex.</text>
</comment>
<comment type="subcellular location">
    <subcellularLocation>
        <location evidence="2">Endoplasmic reticulum membrane</location>
        <topology evidence="3">Single-pass membrane protein</topology>
    </subcellularLocation>
</comment>
<comment type="similarity">
    <text evidence="4">Belongs to the ALG14 family.</text>
</comment>
<sequence length="216" mass="23979">MVCVLTLAASAGGLAVLLIVRLWAVLRSHPVTPRQSLGLLIVAGSGGHTAEILRLVGSLSGAYSPRHYVIAESDEMSAKKIHSLELARAQNDSTTEHTEYYLHRIPRSREVRQSWLSSVFTTLYSIWFSFPLVHRIKPDLVLCNGPGTCVPICVSALLLGILGIKKVIIVYVESICRVETLSLSGKILWHLSDYFIVQWPTLKEKYPKSVYLGRIV</sequence>
<proteinExistence type="evidence at transcript level"/>
<protein>
    <recommendedName>
        <fullName evidence="2">UDP-N-acetylglucosamine transferase subunit ALG14</fullName>
    </recommendedName>
    <alternativeName>
        <fullName evidence="5">Asparagine-linked glycosylation 14 homolog</fullName>
    </alternativeName>
</protein>
<name>ALG14_RAT</name>
<accession>Q6AY85</accession>
<dbReference type="EMBL" id="BC079151">
    <property type="protein sequence ID" value="AAH79151.1"/>
    <property type="molecule type" value="mRNA"/>
</dbReference>
<dbReference type="RefSeq" id="NP_001014198.1">
    <property type="nucleotide sequence ID" value="NM_001014176.2"/>
</dbReference>
<dbReference type="SMR" id="Q6AY85"/>
<dbReference type="FunCoup" id="Q6AY85">
    <property type="interactions" value="1413"/>
</dbReference>
<dbReference type="STRING" id="10116.ENSRNOP00000015355"/>
<dbReference type="PhosphoSitePlus" id="Q6AY85"/>
<dbReference type="PaxDb" id="10116-ENSRNOP00000015355"/>
<dbReference type="GeneID" id="362031"/>
<dbReference type="KEGG" id="rno:362031"/>
<dbReference type="UCSC" id="RGD:1312003">
    <property type="organism name" value="rat"/>
</dbReference>
<dbReference type="AGR" id="RGD:1312003"/>
<dbReference type="CTD" id="199857"/>
<dbReference type="RGD" id="1312003">
    <property type="gene designation" value="Alg14"/>
</dbReference>
<dbReference type="VEuPathDB" id="HostDB:ENSRNOG00000011528"/>
<dbReference type="eggNOG" id="KOG3339">
    <property type="taxonomic scope" value="Eukaryota"/>
</dbReference>
<dbReference type="HOGENOM" id="CLU_064541_2_0_1"/>
<dbReference type="InParanoid" id="Q6AY85"/>
<dbReference type="PhylomeDB" id="Q6AY85"/>
<dbReference type="TreeFam" id="TF105628"/>
<dbReference type="Reactome" id="R-RNO-446193">
    <property type="pathway name" value="Biosynthesis of the N-glycan precursor (dolichol lipid-linked oligosaccharide, LLO) and transfer to a nascent protein"/>
</dbReference>
<dbReference type="PRO" id="PR:Q6AY85"/>
<dbReference type="Proteomes" id="UP000002494">
    <property type="component" value="Chromosome 2"/>
</dbReference>
<dbReference type="Bgee" id="ENSRNOG00000011528">
    <property type="expression patterns" value="Expressed in ovary and 20 other cell types or tissues"/>
</dbReference>
<dbReference type="GO" id="GO:0098554">
    <property type="term" value="C:cytoplasmic side of endoplasmic reticulum membrane"/>
    <property type="evidence" value="ECO:0000250"/>
    <property type="project" value="UniProtKB"/>
</dbReference>
<dbReference type="GO" id="GO:0043541">
    <property type="term" value="C:UDP-N-acetylglucosamine transferase complex"/>
    <property type="evidence" value="ECO:0000250"/>
    <property type="project" value="UniProtKB"/>
</dbReference>
<dbReference type="GO" id="GO:0043495">
    <property type="term" value="F:protein-membrane adaptor activity"/>
    <property type="evidence" value="ECO:0000266"/>
    <property type="project" value="RGD"/>
</dbReference>
<dbReference type="GO" id="GO:0006488">
    <property type="term" value="P:dolichol-linked oligosaccharide biosynthetic process"/>
    <property type="evidence" value="ECO:0000250"/>
    <property type="project" value="UniProtKB"/>
</dbReference>
<dbReference type="GO" id="GO:0006487">
    <property type="term" value="P:protein N-linked glycosylation"/>
    <property type="evidence" value="ECO:0000250"/>
    <property type="project" value="UniProtKB"/>
</dbReference>
<dbReference type="FunFam" id="3.40.50.2000:FF:000098">
    <property type="entry name" value="UDP-N-acetylglucosamine transferase subunit ALG14 homolog"/>
    <property type="match status" value="1"/>
</dbReference>
<dbReference type="Gene3D" id="3.40.50.2000">
    <property type="entry name" value="Glycogen Phosphorylase B"/>
    <property type="match status" value="1"/>
</dbReference>
<dbReference type="InterPro" id="IPR013969">
    <property type="entry name" value="Oligosacch_biosynth_Alg14"/>
</dbReference>
<dbReference type="PANTHER" id="PTHR12154">
    <property type="entry name" value="GLYCOSYL TRANSFERASE-RELATED"/>
    <property type="match status" value="1"/>
</dbReference>
<dbReference type="PANTHER" id="PTHR12154:SF4">
    <property type="entry name" value="UDP-N-ACETYLGLUCOSAMINE TRANSFERASE SUBUNIT ALG14 HOMOLOG"/>
    <property type="match status" value="1"/>
</dbReference>
<dbReference type="Pfam" id="PF08660">
    <property type="entry name" value="Alg14"/>
    <property type="match status" value="1"/>
</dbReference>
<dbReference type="SUPFAM" id="SSF53756">
    <property type="entry name" value="UDP-Glycosyltransferase/glycogen phosphorylase"/>
    <property type="match status" value="1"/>
</dbReference>
<evidence type="ECO:0000250" key="1">
    <source>
        <dbReference type="UniProtKB" id="P38242"/>
    </source>
</evidence>
<evidence type="ECO:0000250" key="2">
    <source>
        <dbReference type="UniProtKB" id="Q96F25"/>
    </source>
</evidence>
<evidence type="ECO:0000255" key="3"/>
<evidence type="ECO:0000305" key="4"/>
<evidence type="ECO:0000312" key="5">
    <source>
        <dbReference type="RGD" id="1312003"/>
    </source>
</evidence>
<keyword id="KW-0256">Endoplasmic reticulum</keyword>
<keyword id="KW-0472">Membrane</keyword>
<keyword id="KW-1185">Reference proteome</keyword>
<keyword id="KW-0812">Transmembrane</keyword>
<keyword id="KW-1133">Transmembrane helix</keyword>
<organism>
    <name type="scientific">Rattus norvegicus</name>
    <name type="common">Rat</name>
    <dbReference type="NCBI Taxonomy" id="10116"/>
    <lineage>
        <taxon>Eukaryota</taxon>
        <taxon>Metazoa</taxon>
        <taxon>Chordata</taxon>
        <taxon>Craniata</taxon>
        <taxon>Vertebrata</taxon>
        <taxon>Euteleostomi</taxon>
        <taxon>Mammalia</taxon>
        <taxon>Eutheria</taxon>
        <taxon>Euarchontoglires</taxon>
        <taxon>Glires</taxon>
        <taxon>Rodentia</taxon>
        <taxon>Myomorpha</taxon>
        <taxon>Muroidea</taxon>
        <taxon>Muridae</taxon>
        <taxon>Murinae</taxon>
        <taxon>Rattus</taxon>
    </lineage>
</organism>
<gene>
    <name evidence="5" type="primary">Alg14</name>
</gene>
<feature type="chain" id="PRO_0000265118" description="UDP-N-acetylglucosamine transferase subunit ALG14">
    <location>
        <begin position="1"/>
        <end position="216"/>
    </location>
</feature>
<feature type="topological domain" description="Lumenal" evidence="1">
    <location>
        <begin position="1"/>
        <end position="3"/>
    </location>
</feature>
<feature type="transmembrane region" description="Helical" evidence="3">
    <location>
        <begin position="4"/>
        <end position="24"/>
    </location>
</feature>
<feature type="topological domain" description="Cytoplasmic" evidence="1">
    <location>
        <begin position="25"/>
        <end position="216"/>
    </location>
</feature>
<reference key="1">
    <citation type="journal article" date="2004" name="Genome Res.">
        <title>The status, quality, and expansion of the NIH full-length cDNA project: the Mammalian Gene Collection (MGC).</title>
        <authorList>
            <consortium name="The MGC Project Team"/>
        </authorList>
    </citation>
    <scope>NUCLEOTIDE SEQUENCE [LARGE SCALE MRNA]</scope>
    <source>
        <tissue>Kidney</tissue>
    </source>
</reference>